<accession>B2SNW4</accession>
<feature type="chain" id="PRO_1000098251" description="6,7-dimethyl-8-ribityllumazine synthase">
    <location>
        <begin position="1"/>
        <end position="154"/>
    </location>
</feature>
<feature type="active site" description="Proton donor" evidence="1">
    <location>
        <position position="88"/>
    </location>
</feature>
<feature type="binding site" evidence="1">
    <location>
        <position position="22"/>
    </location>
    <ligand>
        <name>5-amino-6-(D-ribitylamino)uracil</name>
        <dbReference type="ChEBI" id="CHEBI:15934"/>
    </ligand>
</feature>
<feature type="binding site" evidence="1">
    <location>
        <begin position="56"/>
        <end position="58"/>
    </location>
    <ligand>
        <name>5-amino-6-(D-ribitylamino)uracil</name>
        <dbReference type="ChEBI" id="CHEBI:15934"/>
    </ligand>
</feature>
<feature type="binding site" evidence="1">
    <location>
        <begin position="80"/>
        <end position="82"/>
    </location>
    <ligand>
        <name>5-amino-6-(D-ribitylamino)uracil</name>
        <dbReference type="ChEBI" id="CHEBI:15934"/>
    </ligand>
</feature>
<feature type="binding site" evidence="1">
    <location>
        <begin position="85"/>
        <end position="86"/>
    </location>
    <ligand>
        <name>(2S)-2-hydroxy-3-oxobutyl phosphate</name>
        <dbReference type="ChEBI" id="CHEBI:58830"/>
    </ligand>
</feature>
<feature type="binding site" evidence="1">
    <location>
        <position position="113"/>
    </location>
    <ligand>
        <name>5-amino-6-(D-ribitylamino)uracil</name>
        <dbReference type="ChEBI" id="CHEBI:15934"/>
    </ligand>
</feature>
<feature type="binding site" evidence="1">
    <location>
        <position position="127"/>
    </location>
    <ligand>
        <name>(2S)-2-hydroxy-3-oxobutyl phosphate</name>
        <dbReference type="ChEBI" id="CHEBI:58830"/>
    </ligand>
</feature>
<name>RISB_XANOP</name>
<protein>
    <recommendedName>
        <fullName evidence="1">6,7-dimethyl-8-ribityllumazine synthase</fullName>
        <shortName evidence="1">DMRL synthase</shortName>
        <shortName evidence="1">LS</shortName>
        <shortName evidence="1">Lumazine synthase</shortName>
        <ecNumber evidence="1">2.5.1.78</ecNumber>
    </recommendedName>
</protein>
<dbReference type="EC" id="2.5.1.78" evidence="1"/>
<dbReference type="EMBL" id="CP000967">
    <property type="protein sequence ID" value="ACD57665.1"/>
    <property type="molecule type" value="Genomic_DNA"/>
</dbReference>
<dbReference type="RefSeq" id="WP_011409394.1">
    <property type="nucleotide sequence ID" value="NC_010717.2"/>
</dbReference>
<dbReference type="SMR" id="B2SNW4"/>
<dbReference type="KEGG" id="xop:PXO_04397"/>
<dbReference type="eggNOG" id="COG0054">
    <property type="taxonomic scope" value="Bacteria"/>
</dbReference>
<dbReference type="HOGENOM" id="CLU_089358_1_2_6"/>
<dbReference type="UniPathway" id="UPA00275">
    <property type="reaction ID" value="UER00404"/>
</dbReference>
<dbReference type="Proteomes" id="UP000001740">
    <property type="component" value="Chromosome"/>
</dbReference>
<dbReference type="GO" id="GO:0005829">
    <property type="term" value="C:cytosol"/>
    <property type="evidence" value="ECO:0007669"/>
    <property type="project" value="TreeGrafter"/>
</dbReference>
<dbReference type="GO" id="GO:0009349">
    <property type="term" value="C:riboflavin synthase complex"/>
    <property type="evidence" value="ECO:0007669"/>
    <property type="project" value="InterPro"/>
</dbReference>
<dbReference type="GO" id="GO:0000906">
    <property type="term" value="F:6,7-dimethyl-8-ribityllumazine synthase activity"/>
    <property type="evidence" value="ECO:0007669"/>
    <property type="project" value="UniProtKB-UniRule"/>
</dbReference>
<dbReference type="GO" id="GO:0009231">
    <property type="term" value="P:riboflavin biosynthetic process"/>
    <property type="evidence" value="ECO:0007669"/>
    <property type="project" value="UniProtKB-UniRule"/>
</dbReference>
<dbReference type="CDD" id="cd09209">
    <property type="entry name" value="Lumazine_synthase-I"/>
    <property type="match status" value="1"/>
</dbReference>
<dbReference type="FunFam" id="3.40.50.960:FF:000004">
    <property type="entry name" value="6,7-dimethyl-8-ribityllumazine synthase"/>
    <property type="match status" value="1"/>
</dbReference>
<dbReference type="Gene3D" id="3.40.50.960">
    <property type="entry name" value="Lumazine/riboflavin synthase"/>
    <property type="match status" value="1"/>
</dbReference>
<dbReference type="HAMAP" id="MF_00178">
    <property type="entry name" value="Lumazine_synth"/>
    <property type="match status" value="1"/>
</dbReference>
<dbReference type="InterPro" id="IPR034964">
    <property type="entry name" value="LS"/>
</dbReference>
<dbReference type="InterPro" id="IPR002180">
    <property type="entry name" value="LS/RS"/>
</dbReference>
<dbReference type="InterPro" id="IPR036467">
    <property type="entry name" value="LS/RS_sf"/>
</dbReference>
<dbReference type="NCBIfam" id="TIGR00114">
    <property type="entry name" value="lumazine-synth"/>
    <property type="match status" value="1"/>
</dbReference>
<dbReference type="PANTHER" id="PTHR21058:SF0">
    <property type="entry name" value="6,7-DIMETHYL-8-RIBITYLLUMAZINE SYNTHASE"/>
    <property type="match status" value="1"/>
</dbReference>
<dbReference type="PANTHER" id="PTHR21058">
    <property type="entry name" value="6,7-DIMETHYL-8-RIBITYLLUMAZINE SYNTHASE DMRL SYNTHASE LUMAZINE SYNTHASE"/>
    <property type="match status" value="1"/>
</dbReference>
<dbReference type="Pfam" id="PF00885">
    <property type="entry name" value="DMRL_synthase"/>
    <property type="match status" value="1"/>
</dbReference>
<dbReference type="SUPFAM" id="SSF52121">
    <property type="entry name" value="Lumazine synthase"/>
    <property type="match status" value="1"/>
</dbReference>
<comment type="function">
    <text evidence="1">Catalyzes the formation of 6,7-dimethyl-8-ribityllumazine by condensation of 5-amino-6-(D-ribitylamino)uracil with 3,4-dihydroxy-2-butanone 4-phosphate. This is the penultimate step in the biosynthesis of riboflavin.</text>
</comment>
<comment type="catalytic activity">
    <reaction evidence="1">
        <text>(2S)-2-hydroxy-3-oxobutyl phosphate + 5-amino-6-(D-ribitylamino)uracil = 6,7-dimethyl-8-(1-D-ribityl)lumazine + phosphate + 2 H2O + H(+)</text>
        <dbReference type="Rhea" id="RHEA:26152"/>
        <dbReference type="ChEBI" id="CHEBI:15377"/>
        <dbReference type="ChEBI" id="CHEBI:15378"/>
        <dbReference type="ChEBI" id="CHEBI:15934"/>
        <dbReference type="ChEBI" id="CHEBI:43474"/>
        <dbReference type="ChEBI" id="CHEBI:58201"/>
        <dbReference type="ChEBI" id="CHEBI:58830"/>
        <dbReference type="EC" id="2.5.1.78"/>
    </reaction>
</comment>
<comment type="pathway">
    <text evidence="1">Cofactor biosynthesis; riboflavin biosynthesis; riboflavin from 2-hydroxy-3-oxobutyl phosphate and 5-amino-6-(D-ribitylamino)uracil: step 1/2.</text>
</comment>
<comment type="subunit">
    <text evidence="1">Forms an icosahedral capsid composed of 60 subunits, arranged as a dodecamer of pentamers.</text>
</comment>
<comment type="similarity">
    <text evidence="1">Belongs to the DMRL synthase family.</text>
</comment>
<sequence length="154" mass="16223">MTHYEGDLRPPTARFAIIASRWNARITDVLVAGARQSLAGNGIGEDAIDVIRVPGAWEIPVAANRVAQSGQHGAIIALGCVIRGDTRHYEHVADLCAEGLMSVQLQTGVPVLNGVLAVERVEDAEARAGGSHGNKGEECALAALELVNLMELLP</sequence>
<organism>
    <name type="scientific">Xanthomonas oryzae pv. oryzae (strain PXO99A)</name>
    <dbReference type="NCBI Taxonomy" id="360094"/>
    <lineage>
        <taxon>Bacteria</taxon>
        <taxon>Pseudomonadati</taxon>
        <taxon>Pseudomonadota</taxon>
        <taxon>Gammaproteobacteria</taxon>
        <taxon>Lysobacterales</taxon>
        <taxon>Lysobacteraceae</taxon>
        <taxon>Xanthomonas</taxon>
    </lineage>
</organism>
<keyword id="KW-0686">Riboflavin biosynthesis</keyword>
<keyword id="KW-0808">Transferase</keyword>
<gene>
    <name evidence="1" type="primary">ribH</name>
    <name type="ordered locus">PXO_04397</name>
</gene>
<proteinExistence type="inferred from homology"/>
<evidence type="ECO:0000255" key="1">
    <source>
        <dbReference type="HAMAP-Rule" id="MF_00178"/>
    </source>
</evidence>
<reference key="1">
    <citation type="journal article" date="2008" name="BMC Genomics">
        <title>Genome sequence and rapid evolution of the rice pathogen Xanthomonas oryzae pv. oryzae PXO99A.</title>
        <authorList>
            <person name="Salzberg S.L."/>
            <person name="Sommer D.D."/>
            <person name="Schatz M.C."/>
            <person name="Phillippy A.M."/>
            <person name="Rabinowicz P.D."/>
            <person name="Tsuge S."/>
            <person name="Furutani A."/>
            <person name="Ochiai H."/>
            <person name="Delcher A.L."/>
            <person name="Kelley D."/>
            <person name="Madupu R."/>
            <person name="Puiu D."/>
            <person name="Radune D."/>
            <person name="Shumway M."/>
            <person name="Trapnell C."/>
            <person name="Aparna G."/>
            <person name="Jha G."/>
            <person name="Pandey A."/>
            <person name="Patil P.B."/>
            <person name="Ishihara H."/>
            <person name="Meyer D.F."/>
            <person name="Szurek B."/>
            <person name="Verdier V."/>
            <person name="Koebnik R."/>
            <person name="Dow J.M."/>
            <person name="Ryan R.P."/>
            <person name="Hirata H."/>
            <person name="Tsuyumu S."/>
            <person name="Won Lee S."/>
            <person name="Seo Y.-S."/>
            <person name="Sriariyanum M."/>
            <person name="Ronald P.C."/>
            <person name="Sonti R.V."/>
            <person name="Van Sluys M.-A."/>
            <person name="Leach J.E."/>
            <person name="White F.F."/>
            <person name="Bogdanove A.J."/>
        </authorList>
    </citation>
    <scope>NUCLEOTIDE SEQUENCE [LARGE SCALE GENOMIC DNA]</scope>
    <source>
        <strain>PXO99A</strain>
    </source>
</reference>